<reference key="1">
    <citation type="journal article" date="2015" name="Biochem. Biophys. Res. Commun.">
        <title>A new enzyme involved in the control of the stereochemistry in the decalin formation during equisetin biosynthesis.</title>
        <authorList>
            <person name="Kato N."/>
            <person name="Nogawa T."/>
            <person name="Hirota H."/>
            <person name="Jang J.H."/>
            <person name="Takahashi S."/>
            <person name="Ahn J.S."/>
            <person name="Osada H."/>
        </authorList>
    </citation>
    <scope>NUCLEOTIDE SEQUENCE [GENOMIC DNA]</scope>
    <scope>FUNCTION</scope>
    <scope>DISRUPTION PHENOTYPE</scope>
    <scope>DOMAIN</scope>
    <scope>PATHWAY</scope>
</reference>
<reference key="2">
    <citation type="journal article" date="2017" name="Chem. Commun. (Camb.)">
        <title>Chemo-enzymatic synthesis of equisetin.</title>
        <authorList>
            <person name="Li X."/>
            <person name="Zheng Q."/>
            <person name="Yin J."/>
            <person name="Liu W."/>
            <person name="Gao S."/>
        </authorList>
    </citation>
    <scope>FUNCTION</scope>
</reference>
<reference key="3">
    <citation type="journal article" date="2018" name="Angew. Chem. Int. Ed.">
        <title>Control of the stereochemical course of [4+2] cycloaddition during trans-decalin formation by Fsa2-family enzymes.</title>
        <authorList>
            <person name="Kato N."/>
            <person name="Nogawa T."/>
            <person name="Takita R."/>
            <person name="Kinugasa K."/>
            <person name="Kanai M."/>
            <person name="Uchiyama M."/>
            <person name="Osada H."/>
            <person name="Takahashi S."/>
        </authorList>
    </citation>
    <scope>FUNCTION</scope>
</reference>
<reference key="4">
    <citation type="journal article" date="2021" name="Angew. Chem. Int. Ed.">
        <title>Molecular basis for two stereoselective Diels-Alderases that produce decalin skeletons*.</title>
        <authorList>
            <person name="Fujiyama K."/>
            <person name="Kato N."/>
            <person name="Re S."/>
            <person name="Kinugasa K."/>
            <person name="Watanabe K."/>
            <person name="Takita R."/>
            <person name="Nogawa T."/>
            <person name="Hino T."/>
            <person name="Osada H."/>
            <person name="Sugita Y."/>
            <person name="Takahashi S."/>
            <person name="Nagano S."/>
        </authorList>
    </citation>
    <scope>FUNCTION</scope>
</reference>
<organism>
    <name type="scientific">Fusarium sp. (strain FN080326)</name>
    <dbReference type="NCBI Taxonomy" id="1608308"/>
    <lineage>
        <taxon>Eukaryota</taxon>
        <taxon>Fungi</taxon>
        <taxon>Dikarya</taxon>
        <taxon>Ascomycota</taxon>
        <taxon>Pezizomycotina</taxon>
        <taxon>Sordariomycetes</taxon>
        <taxon>Hypocreomycetidae</taxon>
        <taxon>Hypocreales</taxon>
        <taxon>Nectriaceae</taxon>
        <taxon>Fusarium</taxon>
    </lineage>
</organism>
<dbReference type="EC" id="2.3.1.-" evidence="13"/>
<dbReference type="EC" id="6.3.2.-" evidence="13"/>
<dbReference type="EMBL" id="LC025956">
    <property type="protein sequence ID" value="BAR40283.1"/>
    <property type="molecule type" value="Genomic_DNA"/>
</dbReference>
<dbReference type="SMR" id="A0A0E4AZP0"/>
<dbReference type="GO" id="GO:0004315">
    <property type="term" value="F:3-oxoacyl-[acyl-carrier-protein] synthase activity"/>
    <property type="evidence" value="ECO:0007669"/>
    <property type="project" value="InterPro"/>
</dbReference>
<dbReference type="GO" id="GO:0004312">
    <property type="term" value="F:fatty acid synthase activity"/>
    <property type="evidence" value="ECO:0007669"/>
    <property type="project" value="TreeGrafter"/>
</dbReference>
<dbReference type="GO" id="GO:0016874">
    <property type="term" value="F:ligase activity"/>
    <property type="evidence" value="ECO:0007669"/>
    <property type="project" value="UniProtKB-KW"/>
</dbReference>
<dbReference type="GO" id="GO:0008168">
    <property type="term" value="F:methyltransferase activity"/>
    <property type="evidence" value="ECO:0007669"/>
    <property type="project" value="UniProtKB-KW"/>
</dbReference>
<dbReference type="GO" id="GO:0016491">
    <property type="term" value="F:oxidoreductase activity"/>
    <property type="evidence" value="ECO:0007669"/>
    <property type="project" value="UniProtKB-KW"/>
</dbReference>
<dbReference type="GO" id="GO:0031177">
    <property type="term" value="F:phosphopantetheine binding"/>
    <property type="evidence" value="ECO:0007669"/>
    <property type="project" value="InterPro"/>
</dbReference>
<dbReference type="GO" id="GO:0006633">
    <property type="term" value="P:fatty acid biosynthetic process"/>
    <property type="evidence" value="ECO:0007669"/>
    <property type="project" value="InterPro"/>
</dbReference>
<dbReference type="GO" id="GO:0032259">
    <property type="term" value="P:methylation"/>
    <property type="evidence" value="ECO:0007669"/>
    <property type="project" value="UniProtKB-KW"/>
</dbReference>
<dbReference type="GO" id="GO:0009403">
    <property type="term" value="P:toxin biosynthetic process"/>
    <property type="evidence" value="ECO:0007669"/>
    <property type="project" value="UniProtKB-ARBA"/>
</dbReference>
<dbReference type="CDD" id="cd05930">
    <property type="entry name" value="A_NRPS"/>
    <property type="match status" value="1"/>
</dbReference>
<dbReference type="CDD" id="cd02440">
    <property type="entry name" value="AdoMet_MTases"/>
    <property type="match status" value="1"/>
</dbReference>
<dbReference type="CDD" id="cd19532">
    <property type="entry name" value="C_PKS-NRPS"/>
    <property type="match status" value="1"/>
</dbReference>
<dbReference type="CDD" id="cd00833">
    <property type="entry name" value="PKS"/>
    <property type="match status" value="1"/>
</dbReference>
<dbReference type="Gene3D" id="3.30.300.30">
    <property type="match status" value="1"/>
</dbReference>
<dbReference type="Gene3D" id="3.30.70.3290">
    <property type="match status" value="1"/>
</dbReference>
<dbReference type="Gene3D" id="3.40.47.10">
    <property type="match status" value="1"/>
</dbReference>
<dbReference type="Gene3D" id="1.10.1200.10">
    <property type="entry name" value="ACP-like"/>
    <property type="match status" value="2"/>
</dbReference>
<dbReference type="Gene3D" id="3.30.559.10">
    <property type="entry name" value="Chloramphenicol acetyltransferase-like domain"/>
    <property type="match status" value="1"/>
</dbReference>
<dbReference type="Gene3D" id="3.40.366.10">
    <property type="entry name" value="Malonyl-Coenzyme A Acyl Carrier Protein, domain 2"/>
    <property type="match status" value="1"/>
</dbReference>
<dbReference type="Gene3D" id="3.40.50.12780">
    <property type="entry name" value="N-terminal domain of ligase-like"/>
    <property type="match status" value="1"/>
</dbReference>
<dbReference type="Gene3D" id="3.40.50.720">
    <property type="entry name" value="NAD(P)-binding Rossmann-like Domain"/>
    <property type="match status" value="2"/>
</dbReference>
<dbReference type="Gene3D" id="3.30.559.30">
    <property type="entry name" value="Nonribosomal peptide synthetase, condensation domain"/>
    <property type="match status" value="1"/>
</dbReference>
<dbReference type="Gene3D" id="3.10.129.110">
    <property type="entry name" value="Polyketide synthase dehydratase"/>
    <property type="match status" value="1"/>
</dbReference>
<dbReference type="Gene3D" id="3.40.50.150">
    <property type="entry name" value="Vaccinia Virus protein VP39"/>
    <property type="match status" value="1"/>
</dbReference>
<dbReference type="InterPro" id="IPR001227">
    <property type="entry name" value="Ac_transferase_dom_sf"/>
</dbReference>
<dbReference type="InterPro" id="IPR036736">
    <property type="entry name" value="ACP-like_sf"/>
</dbReference>
<dbReference type="InterPro" id="IPR014043">
    <property type="entry name" value="Acyl_transferase_dom"/>
</dbReference>
<dbReference type="InterPro" id="IPR016035">
    <property type="entry name" value="Acyl_Trfase/lysoPLipase"/>
</dbReference>
<dbReference type="InterPro" id="IPR045851">
    <property type="entry name" value="AMP-bd_C_sf"/>
</dbReference>
<dbReference type="InterPro" id="IPR020845">
    <property type="entry name" value="AMP-binding_CS"/>
</dbReference>
<dbReference type="InterPro" id="IPR000873">
    <property type="entry name" value="AMP-dep_synth/lig_dom"/>
</dbReference>
<dbReference type="InterPro" id="IPR042099">
    <property type="entry name" value="ANL_N_sf"/>
</dbReference>
<dbReference type="InterPro" id="IPR023213">
    <property type="entry name" value="CAT-like_dom_sf"/>
</dbReference>
<dbReference type="InterPro" id="IPR001242">
    <property type="entry name" value="Condensatn"/>
</dbReference>
<dbReference type="InterPro" id="IPR013120">
    <property type="entry name" value="Far_NAD-bd"/>
</dbReference>
<dbReference type="InterPro" id="IPR018201">
    <property type="entry name" value="Ketoacyl_synth_AS"/>
</dbReference>
<dbReference type="InterPro" id="IPR014031">
    <property type="entry name" value="Ketoacyl_synth_C"/>
</dbReference>
<dbReference type="InterPro" id="IPR014030">
    <property type="entry name" value="Ketoacyl_synth_N"/>
</dbReference>
<dbReference type="InterPro" id="IPR016036">
    <property type="entry name" value="Malonyl_transacylase_ACP-bd"/>
</dbReference>
<dbReference type="InterPro" id="IPR013217">
    <property type="entry name" value="Methyltransf_12"/>
</dbReference>
<dbReference type="InterPro" id="IPR036291">
    <property type="entry name" value="NAD(P)-bd_dom_sf"/>
</dbReference>
<dbReference type="InterPro" id="IPR020841">
    <property type="entry name" value="PKS_Beta-ketoAc_synthase_dom"/>
</dbReference>
<dbReference type="InterPro" id="IPR042104">
    <property type="entry name" value="PKS_dehydratase_sf"/>
</dbReference>
<dbReference type="InterPro" id="IPR020807">
    <property type="entry name" value="PKS_DH"/>
</dbReference>
<dbReference type="InterPro" id="IPR049551">
    <property type="entry name" value="PKS_DH_C"/>
</dbReference>
<dbReference type="InterPro" id="IPR049552">
    <property type="entry name" value="PKS_DH_N"/>
</dbReference>
<dbReference type="InterPro" id="IPR013968">
    <property type="entry name" value="PKS_KR"/>
</dbReference>
<dbReference type="InterPro" id="IPR049900">
    <property type="entry name" value="PKS_mFAS_DH"/>
</dbReference>
<dbReference type="InterPro" id="IPR050091">
    <property type="entry name" value="PKS_NRPS_Biosynth_Enz"/>
</dbReference>
<dbReference type="InterPro" id="IPR020806">
    <property type="entry name" value="PKS_PP-bd"/>
</dbReference>
<dbReference type="InterPro" id="IPR009081">
    <property type="entry name" value="PP-bd_ACP"/>
</dbReference>
<dbReference type="InterPro" id="IPR029063">
    <property type="entry name" value="SAM-dependent_MTases_sf"/>
</dbReference>
<dbReference type="InterPro" id="IPR016039">
    <property type="entry name" value="Thiolase-like"/>
</dbReference>
<dbReference type="PANTHER" id="PTHR43775">
    <property type="entry name" value="FATTY ACID SYNTHASE"/>
    <property type="match status" value="1"/>
</dbReference>
<dbReference type="PANTHER" id="PTHR43775:SF20">
    <property type="entry name" value="HYBRID PKS-NRPS SYNTHETASE APDA"/>
    <property type="match status" value="1"/>
</dbReference>
<dbReference type="Pfam" id="PF00698">
    <property type="entry name" value="Acyl_transf_1"/>
    <property type="match status" value="1"/>
</dbReference>
<dbReference type="Pfam" id="PF00501">
    <property type="entry name" value="AMP-binding"/>
    <property type="match status" value="1"/>
</dbReference>
<dbReference type="Pfam" id="PF00668">
    <property type="entry name" value="Condensation"/>
    <property type="match status" value="1"/>
</dbReference>
<dbReference type="Pfam" id="PF22621">
    <property type="entry name" value="CurL-like_PKS_C"/>
    <property type="match status" value="1"/>
</dbReference>
<dbReference type="Pfam" id="PF00109">
    <property type="entry name" value="ketoacyl-synt"/>
    <property type="match status" value="1"/>
</dbReference>
<dbReference type="Pfam" id="PF02801">
    <property type="entry name" value="Ketoacyl-synt_C"/>
    <property type="match status" value="1"/>
</dbReference>
<dbReference type="Pfam" id="PF08659">
    <property type="entry name" value="KR"/>
    <property type="match status" value="1"/>
</dbReference>
<dbReference type="Pfam" id="PF08242">
    <property type="entry name" value="Methyltransf_12"/>
    <property type="match status" value="1"/>
</dbReference>
<dbReference type="Pfam" id="PF07993">
    <property type="entry name" value="NAD_binding_4"/>
    <property type="match status" value="1"/>
</dbReference>
<dbReference type="Pfam" id="PF21089">
    <property type="entry name" value="PKS_DH_N"/>
    <property type="match status" value="1"/>
</dbReference>
<dbReference type="Pfam" id="PF00550">
    <property type="entry name" value="PP-binding"/>
    <property type="match status" value="2"/>
</dbReference>
<dbReference type="Pfam" id="PF14765">
    <property type="entry name" value="PS-DH"/>
    <property type="match status" value="1"/>
</dbReference>
<dbReference type="SMART" id="SM00827">
    <property type="entry name" value="PKS_AT"/>
    <property type="match status" value="1"/>
</dbReference>
<dbReference type="SMART" id="SM00826">
    <property type="entry name" value="PKS_DH"/>
    <property type="match status" value="1"/>
</dbReference>
<dbReference type="SMART" id="SM00822">
    <property type="entry name" value="PKS_KR"/>
    <property type="match status" value="1"/>
</dbReference>
<dbReference type="SMART" id="SM00825">
    <property type="entry name" value="PKS_KS"/>
    <property type="match status" value="1"/>
</dbReference>
<dbReference type="SMART" id="SM00823">
    <property type="entry name" value="PKS_PP"/>
    <property type="match status" value="1"/>
</dbReference>
<dbReference type="SUPFAM" id="SSF56801">
    <property type="entry name" value="Acetyl-CoA synthetase-like"/>
    <property type="match status" value="1"/>
</dbReference>
<dbReference type="SUPFAM" id="SSF47336">
    <property type="entry name" value="ACP-like"/>
    <property type="match status" value="2"/>
</dbReference>
<dbReference type="SUPFAM" id="SSF52777">
    <property type="entry name" value="CoA-dependent acyltransferases"/>
    <property type="match status" value="2"/>
</dbReference>
<dbReference type="SUPFAM" id="SSF52151">
    <property type="entry name" value="FabD/lysophospholipase-like"/>
    <property type="match status" value="1"/>
</dbReference>
<dbReference type="SUPFAM" id="SSF51735">
    <property type="entry name" value="NAD(P)-binding Rossmann-fold domains"/>
    <property type="match status" value="2"/>
</dbReference>
<dbReference type="SUPFAM" id="SSF55048">
    <property type="entry name" value="Probable ACP-binding domain of malonyl-CoA ACP transacylase"/>
    <property type="match status" value="1"/>
</dbReference>
<dbReference type="SUPFAM" id="SSF53335">
    <property type="entry name" value="S-adenosyl-L-methionine-dependent methyltransferases"/>
    <property type="match status" value="1"/>
</dbReference>
<dbReference type="SUPFAM" id="SSF53901">
    <property type="entry name" value="Thiolase-like"/>
    <property type="match status" value="1"/>
</dbReference>
<dbReference type="PROSITE" id="PS00061">
    <property type="entry name" value="ADH_SHORT"/>
    <property type="match status" value="1"/>
</dbReference>
<dbReference type="PROSITE" id="PS00455">
    <property type="entry name" value="AMP_BINDING"/>
    <property type="match status" value="1"/>
</dbReference>
<dbReference type="PROSITE" id="PS50075">
    <property type="entry name" value="CARRIER"/>
    <property type="match status" value="2"/>
</dbReference>
<dbReference type="PROSITE" id="PS00606">
    <property type="entry name" value="KS3_1"/>
    <property type="match status" value="1"/>
</dbReference>
<dbReference type="PROSITE" id="PS52004">
    <property type="entry name" value="KS3_2"/>
    <property type="match status" value="1"/>
</dbReference>
<dbReference type="PROSITE" id="PS52019">
    <property type="entry name" value="PKS_MFAS_DH"/>
    <property type="match status" value="1"/>
</dbReference>
<gene>
    <name evidence="11" type="primary">fsa1</name>
</gene>
<name>FSA1_FUSSF</name>
<proteinExistence type="inferred from homology"/>
<feature type="chain" id="PRO_0000441288" description="Hybrid PKS-NRPS synthetase fsa1">
    <location>
        <begin position="1"/>
        <end position="3948"/>
    </location>
</feature>
<feature type="domain" description="Ketosynthase family 3 (KS3)" evidence="4 13">
    <location>
        <begin position="4"/>
        <end position="438"/>
    </location>
</feature>
<feature type="domain" description="PKS/mFAS DH" evidence="5">
    <location>
        <begin position="931"/>
        <end position="1235"/>
    </location>
</feature>
<feature type="domain" description="Carrier 1" evidence="3">
    <location>
        <begin position="2389"/>
        <end position="2464"/>
    </location>
</feature>
<feature type="domain" description="Carrier 2" evidence="3">
    <location>
        <begin position="3540"/>
        <end position="3617"/>
    </location>
</feature>
<feature type="region of interest" description="Malonyl-CoA:ACP transacylase (MAT) domain" evidence="2 13">
    <location>
        <begin position="543"/>
        <end position="846"/>
    </location>
</feature>
<feature type="region of interest" description="Dehydratase (DH) domain" evidence="2 13">
    <location>
        <begin position="931"/>
        <end position="1233"/>
    </location>
</feature>
<feature type="region of interest" description="N-terminal hotdog fold" evidence="5">
    <location>
        <begin position="931"/>
        <end position="1066"/>
    </location>
</feature>
<feature type="region of interest" description="C-terminal hotdog fold" evidence="5">
    <location>
        <begin position="1081"/>
        <end position="1235"/>
    </location>
</feature>
<feature type="region of interest" description="Methyltransferase (MT) domain" evidence="2 13">
    <location>
        <begin position="1381"/>
        <end position="1578"/>
    </location>
</feature>
<feature type="region of interest" description="Ketoreductase (KR) domain" evidence="2 13">
    <location>
        <begin position="2105"/>
        <end position="2277"/>
    </location>
</feature>
<feature type="region of interest" description="Disordered" evidence="6">
    <location>
        <begin position="2475"/>
        <end position="2555"/>
    </location>
</feature>
<feature type="region of interest" description="Condensation (C) domain" evidence="2 13">
    <location>
        <begin position="2547"/>
        <end position="2976"/>
    </location>
</feature>
<feature type="region of interest" description="Adenylation (A) (KR) domain" evidence="2 13">
    <location>
        <begin position="3000"/>
        <end position="3402"/>
    </location>
</feature>
<feature type="region of interest" description="Reductase (RED) domain" evidence="2 13">
    <location>
        <begin position="3653"/>
        <end position="3870"/>
    </location>
</feature>
<feature type="compositionally biased region" description="Polar residues" evidence="6">
    <location>
        <begin position="2487"/>
        <end position="2505"/>
    </location>
</feature>
<feature type="compositionally biased region" description="Polar residues" evidence="6">
    <location>
        <begin position="2513"/>
        <end position="2528"/>
    </location>
</feature>
<feature type="compositionally biased region" description="Basic and acidic residues" evidence="6">
    <location>
        <begin position="2529"/>
        <end position="2541"/>
    </location>
</feature>
<feature type="compositionally biased region" description="Polar residues" evidence="6">
    <location>
        <begin position="2542"/>
        <end position="2551"/>
    </location>
</feature>
<feature type="active site" description="For beta-ketoacyl synthase activity" evidence="4">
    <location>
        <position position="177"/>
    </location>
</feature>
<feature type="active site" description="For beta-ketoacyl synthase activity" evidence="4">
    <location>
        <position position="316"/>
    </location>
</feature>
<feature type="active site" description="For beta-ketoacyl synthase activity" evidence="4">
    <location>
        <position position="358"/>
    </location>
</feature>
<feature type="active site" description="Proton acceptor; for dehydratase activity" evidence="5">
    <location>
        <position position="964"/>
    </location>
</feature>
<feature type="active site" description="Proton donor; for dehydratase activity" evidence="5">
    <location>
        <position position="1141"/>
    </location>
</feature>
<feature type="modified residue" description="O-(pantetheine 4'-phosphoryl)serine" evidence="3">
    <location>
        <position position="2424"/>
    </location>
</feature>
<feature type="modified residue" description="O-(pantetheine 4'-phosphoryl)serine" evidence="3">
    <location>
        <position position="3577"/>
    </location>
</feature>
<keyword id="KW-0436">Ligase</keyword>
<keyword id="KW-0489">Methyltransferase</keyword>
<keyword id="KW-0511">Multifunctional enzyme</keyword>
<keyword id="KW-0560">Oxidoreductase</keyword>
<keyword id="KW-0596">Phosphopantetheine</keyword>
<keyword id="KW-0597">Phosphoprotein</keyword>
<keyword id="KW-0677">Repeat</keyword>
<keyword id="KW-0808">Transferase</keyword>
<accession>A0A0E4AZP0</accession>
<evidence type="ECO:0000250" key="1">
    <source>
        <dbReference type="UniProtKB" id="Q4WAZ9"/>
    </source>
</evidence>
<evidence type="ECO:0000255" key="2"/>
<evidence type="ECO:0000255" key="3">
    <source>
        <dbReference type="PROSITE-ProRule" id="PRU00258"/>
    </source>
</evidence>
<evidence type="ECO:0000255" key="4">
    <source>
        <dbReference type="PROSITE-ProRule" id="PRU01348"/>
    </source>
</evidence>
<evidence type="ECO:0000255" key="5">
    <source>
        <dbReference type="PROSITE-ProRule" id="PRU01363"/>
    </source>
</evidence>
<evidence type="ECO:0000256" key="6">
    <source>
        <dbReference type="SAM" id="MobiDB-lite"/>
    </source>
</evidence>
<evidence type="ECO:0000269" key="7">
    <source>
    </source>
</evidence>
<evidence type="ECO:0000269" key="8">
    <source>
    </source>
</evidence>
<evidence type="ECO:0000269" key="9">
    <source>
    </source>
</evidence>
<evidence type="ECO:0000269" key="10">
    <source>
    </source>
</evidence>
<evidence type="ECO:0000303" key="11">
    <source>
    </source>
</evidence>
<evidence type="ECO:0000305" key="12"/>
<evidence type="ECO:0000305" key="13">
    <source>
    </source>
</evidence>
<sequence>MDASEPIAVIGSACRFPGGSDSPSKLWELLKEPRDLLSKVPPERYNADAFYHADATHHGTTNVRHSYFLSEDPSSFDNNFFNIQPGEAEAIDPQQRLLMEVVYQGLCSAGQTIEGLRGSPTAVYVGVMCDDWSGIITRDLEVFPRYGATGMARSIMSNRISYFFDWHGPSMTIDTACSSSLVAVHQAIQTLRSGESEVAIAAGANLILTPGMYVAESKLSMLSPSGRSKMWDQDVDGYARGEGIAAVVLKPLSAAIRDNDHIDCIIRATGINQDGRTPGLTMPSATAQADLIRSTYARAGLDINKAEDRPQFFHAHGTGTPAGDPREAEAISRAFYSPDNLSKDDKLYVGSIKTIIGHTEGTAGLASLIGTSLAIQNKVIPPNMHLDVLNPKVAPFYNNLEVPTSALEWPETRSGQPRRASINSFGFGGTNAHAIIEAYEPNATAHVSGALFSPLTFSASSEPSLRSLLMSYSEYLKLNPQISLKDLAYSLQTRRSTLAYRVAITASTAENASKQLDAIVDGEQSSSISTRQLSKSSPKILGIFTGQGTQWPRMGARLLEESPFASKRLAELDDALSSLPADDRPTWTLREMILADSESSRVAEAAISQPLCTAVQVVLVDLLRHAGIELSAVVGHSSGEIGAAYAAGLLTARDAIRVAYYRGLYAKLAQSPNGHKGAMMAVGTTFEDAADFCELEAFQGRIQIAAKNSPSSITLSGDEDAIIEAIEIFKDEGKFARQLKVDTAYHSSHVIPCAKPYLEAMNRCGIETATATKTQWYSSVHGGQIMSADSLTTSYWVDNMTSAVLFSPAVAQAWEEGGPYDLAIEVGPHPALKTPALDTIEAISEGRPPYTGVIARGKDDIQQFSNALGFIWTHLGPGSIAFENFESVVSGSKDRPSFIQDLPNYPFDHAKQFMSMSRVSGWFNSIQEAPHPLLGRRCHDRETSHSVQWRNVLSHKEIPWLQGHQLQGQIIFPATGYISMAVEAIKILAEPSSLGLITIEDLSITRALAFADEDASIETLFELRILSRSETEIQAEFCCYSGIPHTHTATMGLNATAQIKASLGTPTSDQLSNIAVDDYDLRPVSVDRFYDFLARLGYNYSWPFRGTTSIRRKANFATGTLEDQSGSNWEDQLMVHPGMLDSSLQTTFAAFCCPGDERLWALHLPTSFRSIAINPYFTSAGIGKQNSFTYQSVAIEERKTSKVLVELNLLSEETGDTFLQIEGMELVPFSPATPANDAVLFSRFDYRLAGPDGELTAAEYSFKPEDYKMALDCERIAFYYLRRLVETITPEEKANTLVHYRHLVDWAAYVVPQVANGGNPHIPASAQQDTHDDIQQLLKKHYERVDIRLLESVGENLPQVIRDSGNILEHMTKDGMLQDVYEQGFGLNLVNQYIAHMTAQIAHRYPRMNILEIGAGTGGSTREILPRLGSAFSTYTYTDVSGGFFDMAQDRFKDYADRMIFKTFDMNISPASQGFTEGAYDLVIASNVLHATLELEDMMKHVRSFLKPGGFLIILETVNNDCLRVGLPMGSLPGWWLGAEHGRRWGPTLTLPQWDSLLSKCGFGGIDTTTPPVHKILPGHVFCAQALDERIEILRSPMEHLATLPETKSTQLAVIGGQTLKVHRMCDQISRRLSSRYSSISRFNSIEELNDTGLPESCTVLSLTELDEPLFANMTYGKLEALKILWKQGGSILWITSGARAENPHSYMTTGVGRCMRFEYPNITLQALDIKQISDRCPELIVDHLLRLEILDKWSKELRSDELLWSLEPEIYIEEETAIIPRLYPYESGNARYNAERRKVIKQADMETDRVVFAEFEGKWEIQHASPLHIAQELPSSSDISARTIQITHLSPATVNIAPGVSAMAWAGVDTASNEPVVAVTHIAESPVSIPAGWCIPLDKLDPVKTLTGVSATLIASSILERLVKGETLVVHDAPPHIRAALDKLAKPVSIAIFYTSSDEAMSKLGARYIDRRSPLRVIRASLPKSASKFISLSQDFGKDETSKVISMCLPRDCETINTAHLFGPRNVAQQSAFEKDVSSSLKKAFEEVGSQVNTTASTDLISLKDTPNPIADQVRFAILDCTDTPIQASVHPIDDGRIFRADKTFLLIGLTGELGQSLCKWMVEQGARSIVLTSRRPNVSEHFLGSFAETGAIVKALPMDVTDRTSIEACLETIKKTLPPIAGVVNGAMVLRDALFENMPYEDFMKVLNPKVVGSQLLDEMFYDTPLDFFIFFSSTTAVMGNSGQSNYIAGNMYMNALAAQRKKRGVAASSIDISSIIGLGYVERAEDLSEDTFIKMGYKPMSEQDLQKLFAEAIVLGRPDCHEVCELVTGVTPIYTDAQASDQYLKDVKFGHFLMERLDTQTYTGKTSTVPVRVQLADVKTRADAVAIIKESFIVRLRRVLAVGPDEIINEKVTLVEQGVDSLMAVEVRSWFIKELDVDIPVLKILGGMSVPDLVDESLDLLSPSILDVSSLEAGNAHPAKPTTVIPQTPTRVTPPESSQGTSDQDKPHTGSDSSRSPIDTPLTSWDRQDLSPPDKSDDAPNSTDNLTPPRTFPNELPSIMSYGQAGFWFLNDYLVNKKAFNMAVMLKLTGSIRTQPLENAVQLVAERHEILRTRFFWSEDGDERTPMQGINPPTMKLTIKTIADEKEAETELKRLHDEDWDLGSGEGVKIILLRLSDQVHFLLSGMHHIYLDGYSFSVFFKDLESAYINHRLPPLPVESQYRTFALQQRKMYDDGDLLKSIEYYRQSFPKEFAPIRLFPFATTASRQLANEYSQHEAKLSITPDVSAKVRQLARANRSTSFHVYLAALKILLFSLLPDTEELFIGIADANRGDKKFMGSLGFFLNLLPLRFQRGKPRSRVSSAIQTARDAAYGALQHSQLPFDVLLRELNVPRSDKHTPIFQVFMDYRQVVQERSSWGGCKLSDEKWCNAGTGYDVALEVTENINTDTLLSLRLQKQLYSEEHTQVLLRSYLSVLEYMIRGSDKSVDAAPAWSSYDLKVAVDAGKAPEFKSKWPPTVSHQIDQVIQNNPDKIALKDGNGNVLTYAQMGNRIDTISKALIDAGTVQGTVVGVFQEPSADWICSLLAIFKAGAVYVPLDLRNSIPRLASIVKASRPSVIITDITTDDKVDLIGAKFVTKLQLGSLDESTRQDSTEINHAKVGSLAVILFTSGSTGEPKGLMMTHTNLLSYAEVSSKTFARVDEDLVVLQQSPFSFDFSLDQTMAALTNGGYLYVVPASKRGDPDEISKIMVEESVTYTTATPSEYDLWLRYSTETLQQCNSWKYAFSGGEAMSYKLAREFGTLKLTNLHVFNGYGPAETTILSHRIDLKYADPDLPDPLPAGYPLPGFSVCIVDDKMRPVPLGVQGEIVLGGPCIVSGYLNMPESTRDKFLPDTFFGTSGTVYRSGDRGRLCYDGLLFCDGRLEGNTMIKLRGFRVELDEVEKTIVSHSAGALSHAVATVRGTEEGRYLVAHIVFAPEFPEQDREGVMKSLRQMLPLPPYMRPSVFQVLPDIPRTAHLKIDRKAIQDIPVQTTQSEISKSLTASEKRLSELWRRVLPLDPGTLTHESDFFLIGGNSILLVKLQALLREGLWMAPKLVTLMGSSTLGAMASVLEDCGPVNVIHWDEEIKFPNDLQLATPLRAAGKSTDINVLLTGSSGYLGRHLLLSLLKDHRVAQVHCLCRTSSDQQVVNDPGSKANIVQSDLAQHNLGIPESTYSQLATEVDVIIHCAANRSFWDRYEALKADNLDSTKELVKFVVSSGRAIPLHFLSSGAVAKYNSGLTPPADGGDGYVATKWASEVFMKQAADSTNLPVFSHRPVACESAQQSEEETISIVNELMQIVKLLGCRPSFDGVGGFVDVMPVNEIVEAIHETALNSQTGEGLCILEHKAHQRAYVRSFATVVESDDGLSKLPCIPILEWFGRAKKAGFSYFLASQDLILGSQLFSRR</sequence>
<comment type="function">
    <text evidence="7 8 9 10">Hybrid PKS-NRPS synthetase; part of the gene cluster that mediates the biosynthesis of HIV-1 integrase inhibitor equisetin and of fusarisetin A, both trans-fused decalin-containing tetramic acids showing also antimicrobial activity (PubMed:25770422). The PKS module of fsa1 together with the enoylreductase fsa3 catalyze the formation of the polyketide unit which is then conjugated to L-serine by the condensation domain of the fsa1 NRPS module (PubMed:25770422). Activity of the Dieckmann cyclase domain (RED) results in release of the Dieckmann product intermediate (PubMed:25770422). Diels-Alderase fsa2 is involved in endo-selective Diels-Alder cycloaddition to form the decalin ring, leading to the production of N-desmethylequisetin also called trichosetin (PubMed:25770422, PubMed:28401214, PubMed:29972614, PubMed:34121297). Subsequent N-methylation is carried out by fsa4 to give equisetin (PubMed:25770422). The enzymatic gene responsible for the conversion of equisetin to fusarisetin A has not been identified yet and is probably located outside of the fsa cluster (PubMed:28401214).</text>
</comment>
<comment type="catalytic activity">
    <reaction evidence="13">
        <text>L-serine + 7 malonyl-CoA + acetyl-CoA + 2 S-adenosyl-L-methionine + ATP + 8 NADPH + 11 H(+) = (5S)-3-[(2E,6R,8E,10E,12E)-2,6-dimethyltetradeca-2,8,10,12-tetraenoyl]-5-(hydroxymethyl)pyrrolidine-2,4-dione + AMP + 2 S-adenosyl-L-homocysteine + 7 CO2 + diphosphate + 8 NADP(+) + 8 CoA + 6 H2O</text>
        <dbReference type="Rhea" id="RHEA:67324"/>
        <dbReference type="ChEBI" id="CHEBI:15377"/>
        <dbReference type="ChEBI" id="CHEBI:15378"/>
        <dbReference type="ChEBI" id="CHEBI:16526"/>
        <dbReference type="ChEBI" id="CHEBI:30616"/>
        <dbReference type="ChEBI" id="CHEBI:33019"/>
        <dbReference type="ChEBI" id="CHEBI:33384"/>
        <dbReference type="ChEBI" id="CHEBI:57287"/>
        <dbReference type="ChEBI" id="CHEBI:57288"/>
        <dbReference type="ChEBI" id="CHEBI:57384"/>
        <dbReference type="ChEBI" id="CHEBI:57783"/>
        <dbReference type="ChEBI" id="CHEBI:57856"/>
        <dbReference type="ChEBI" id="CHEBI:58349"/>
        <dbReference type="ChEBI" id="CHEBI:59789"/>
        <dbReference type="ChEBI" id="CHEBI:169938"/>
        <dbReference type="ChEBI" id="CHEBI:456215"/>
    </reaction>
    <physiologicalReaction direction="left-to-right" evidence="13">
        <dbReference type="Rhea" id="RHEA:67325"/>
    </physiologicalReaction>
</comment>
<comment type="pathway">
    <text evidence="7">Mycotoxin biosynthesis.</text>
</comment>
<comment type="domain">
    <text evidence="1 13">NRP synthetases are composed of discrete domains (adenylation (A), thiolation (T) or peptidyl carrier protein (PCP) and condensation (C) domains) which when grouped together are referred to as a single module. Each module is responsible for the recognition (via the A domain) and incorporation of a single amino acid into the growing peptide product (By similarity). Thus, an NRP synthetase is generally composed of one or more modules and can terminate in a thioesterase domain (TE) that releases the newly synthesized peptide from the enzyme (By similarity). Occasionally, epimerase (E) domains (responsible for l- to d-amino acid conversion) are present within the NRP synthetase (By similarity). Fsa1 also contains a polyketide synthase module (PKS) consisting of several catalytic domains including a ketoacyl synthase domain (KS), an acyl transferase domain (AT), a dehydratase domain (DH), a methyltransferase domain (MT), and a ketoreductase domain (KR) (PubMed:25770422). Instead of a thioesterase domain (TE), fsa1 finishes with a reductase-like domain (R) for peptide release (PubMed:25770422). Fsa1 has the following architecture: KS-AT-DH-KR-PCP-C-A-T-R (PubMed:25770422).</text>
</comment>
<comment type="disruption phenotype">
    <text evidence="7">Results in the loss of production of equisetin and fusarisetin A (PubMed:25770422).</text>
</comment>
<comment type="similarity">
    <text evidence="12">In the C-terminal section; belongs to the NRP synthetase family.</text>
</comment>
<protein>
    <recommendedName>
        <fullName evidence="11">Hybrid PKS-NRPS synthetase fsa1</fullName>
        <ecNumber evidence="13">2.3.1.-</ecNumber>
        <ecNumber evidence="13">6.3.2.-</ecNumber>
    </recommendedName>
    <alternativeName>
        <fullName evidence="11">Fusarisetin A biosynthesis protein 1</fullName>
    </alternativeName>
</protein>